<comment type="function">
    <text evidence="4 17 18 19 21 22 24 29">Monooxygenase that promotes depolymerization of F-actin by mediating oxidation of specific methionine residues on actin to form methionine-sulfoxide, resulting in actin filament disassembly and preventing repolymerization (PubMed:29343822). In the absence of actin, it also functions as a NADPH oxidase producing H(2)O(2) (PubMed:21864500, PubMed:26845023, PubMed:29343822). Acts as a cytoskeletal regulator that connects NEDD9 to intermediate filaments. Also acts as a negative regulator of apoptosis via its interaction with STK38 and STK38L; acts by antagonizing STK38 and STK38L activation by MST1/STK4. Involved in regulation of lamina-specific connectivity in the nervous system such as the development of lamina-restricted hippocampal connections. Through redox regulation of the actin cytoskeleton controls the intracellular distribution of secretory vesicles containing L1/neurofascin/NgCAM family proteins in neurons, thereby regulating their cell surface levels (By similarity). May act as Rab effector protein and play a role in vesicle trafficking. Promotes endosomal tubule extension by associating with RAB8 (RAB8A or RAB8B), RAB10 and GRAF (GRAF1/ARHGAP26 or GRAF2/ARHGAP10) on the endosomal membrane which may connect GRAFs to Rabs, thereby participating in neosynthesized Rab8-Rab10-Rab11-dependent protein export (PubMed:32344433).</text>
</comment>
<comment type="catalytic activity">
    <reaction evidence="22">
        <text>L-methionyl-[F-actin] + NADPH + O2 + H(+) = L-methionyl-(R)-S-oxide-[F-actin] + NADP(+) + H2O</text>
        <dbReference type="Rhea" id="RHEA:51308"/>
        <dbReference type="Rhea" id="RHEA-COMP:12953"/>
        <dbReference type="Rhea" id="RHEA-COMP:12956"/>
        <dbReference type="ChEBI" id="CHEBI:15377"/>
        <dbReference type="ChEBI" id="CHEBI:15378"/>
        <dbReference type="ChEBI" id="CHEBI:15379"/>
        <dbReference type="ChEBI" id="CHEBI:16044"/>
        <dbReference type="ChEBI" id="CHEBI:45764"/>
        <dbReference type="ChEBI" id="CHEBI:57783"/>
        <dbReference type="ChEBI" id="CHEBI:58349"/>
        <dbReference type="EC" id="1.14.13.225"/>
    </reaction>
</comment>
<comment type="catalytic activity">
    <reaction evidence="18 19 22">
        <text>NADPH + O2 + H(+) = H2O2 + NADP(+)</text>
        <dbReference type="Rhea" id="RHEA:11260"/>
        <dbReference type="ChEBI" id="CHEBI:15378"/>
        <dbReference type="ChEBI" id="CHEBI:15379"/>
        <dbReference type="ChEBI" id="CHEBI:16240"/>
        <dbReference type="ChEBI" id="CHEBI:57783"/>
        <dbReference type="ChEBI" id="CHEBI:58349"/>
        <dbReference type="EC" id="1.6.3.1"/>
    </reaction>
</comment>
<comment type="cofactor">
    <cofactor evidence="18">
        <name>FAD</name>
        <dbReference type="ChEBI" id="CHEBI:57692"/>
    </cofactor>
</comment>
<comment type="biophysicochemical properties">
    <kinetics>
        <KM evidence="18">4.7 uM for F-actin (at saturating NADPH concentration)</KM>
        <KM evidence="19">375 uM for NADPH (for the NADPH oxidase reaction)</KM>
        <text evidence="19">kcat is 0.28 sec(-1) for NADPH for the NADPH oxidase reaction.</text>
    </kinetics>
</comment>
<comment type="subunit">
    <text evidence="1 10 11 12 15 20 23 24">Interacts with STK38 and STK38L (By similarity). Interacts with RAB1B, RAB8A, RAB10, RAB13, RAB15 and RAB35 (in their GTP-bound forms); binding to RAB1B is of low affinity compared to other Rab proteins; at least in case of RAB8A and RAB10 can bind 2 molecules of the Rab proteins simultaneously; ternary complex formation of RAB8A, RAB13 and MICAL1 is possible. Associates with the SH3 domain of NEDD9. Interacts with VIM and PLXNA3. Interacts with GRAF1/ARHGAP26, GRAF2/ARHGAP10, RAB8A, RAB8B and RAB10; may bind simultaneously to GRAFs and Rabs and connects GRAFs to Rabs (PubMed:32344433). Does not interact with RAB1 and RAB11A (PubMed:32344433).</text>
</comment>
<comment type="interaction">
    <interactant intactId="EBI-7153876">
        <id>Q8TDZ2</id>
    </interactant>
    <interactant intactId="EBI-12270182">
        <id>Q9NQ75-2</id>
        <label>CASS4</label>
    </interactant>
    <organismsDiffer>false</organismsDiffer>
    <experiments>2</experiments>
</comment>
<comment type="subcellular location">
    <subcellularLocation>
        <location evidence="24">Cytoplasm</location>
    </subcellularLocation>
    <subcellularLocation>
        <location>Cytoplasm</location>
        <location>Cytoskeleton</location>
    </subcellularLocation>
    <subcellularLocation>
        <location evidence="24">Endosome membrane</location>
    </subcellularLocation>
    <subcellularLocation>
        <location evidence="21">Midbody</location>
    </subcellularLocation>
    <text evidence="21 24">Accumulates transiently at the abscission site before abscission occurs. Colocalized with GRAF1/ARHGAP26 and GRAF2/ARHGAP10, RAB8A, RAB8B and RAB10 on endosomal tubules (PubMed:32344433).</text>
</comment>
<comment type="alternative products">
    <event type="alternative splicing"/>
    <isoform>
        <id>Q8TDZ2-1</id>
        <name>1</name>
        <name>MICAL-1a</name>
        <sequence type="displayed"/>
    </isoform>
    <isoform>
        <id>Q8TDZ2-2</id>
        <name>2</name>
        <name>MICAL-1b</name>
        <sequence type="described" ref="VSP_009639"/>
    </isoform>
    <isoform>
        <id>Q8TDZ2-3</id>
        <name>3</name>
        <sequence type="described" ref="VSP_009637 VSP_009638"/>
    </isoform>
    <isoform>
        <id>Q8TDZ2-4</id>
        <name>4</name>
        <sequence type="described" ref="VSP_042590"/>
    </isoform>
</comment>
<comment type="tissue specificity">
    <text evidence="10">Expressed in the thymus, lung, spleen, kidney, testis and hematopoietic cells.</text>
</comment>
<comment type="domain">
    <text evidence="20 24">The bivalent Mical/EHBP Rab binding (bMERB) domain, mediates binding to predominantly Rab8, Rab10, Rab13 and Rab15 (in their GTP-bound forms).</text>
</comment>
<comment type="domain">
    <text>The C-terminal coiled coil part contains the plexin-interacting region.</text>
</comment>
<comment type="similarity">
    <text evidence="28">Belongs to the Mical family.</text>
</comment>
<comment type="caution">
    <text evidence="3 4 18 19">The reaction mechanism is subject to discussion. Some work suggest MICAL enzymes directly oxidize actin methionine residues to produce methionine-(R)-S-oxide. Other publications suggest that the enzyme functions as a NADPH oxidase producing H(2)O(2) (EC 1.6.3.1) and that it is the produced H(2)O(2) that is responsible for the methionine-(R)-S-oxide production.</text>
</comment>
<name>MICA1_HUMAN</name>
<evidence type="ECO:0000250" key="1"/>
<evidence type="ECO:0000250" key="2">
    <source>
        <dbReference type="UniProtKB" id="D3ZBP4"/>
    </source>
</evidence>
<evidence type="ECO:0000250" key="3">
    <source>
        <dbReference type="UniProtKB" id="Q86BA1"/>
    </source>
</evidence>
<evidence type="ECO:0000250" key="4">
    <source>
        <dbReference type="UniProtKB" id="Q8VDP3"/>
    </source>
</evidence>
<evidence type="ECO:0000255" key="5"/>
<evidence type="ECO:0000255" key="6">
    <source>
        <dbReference type="PROSITE-ProRule" id="PRU00044"/>
    </source>
</evidence>
<evidence type="ECO:0000255" key="7">
    <source>
        <dbReference type="PROSITE-ProRule" id="PRU00125"/>
    </source>
</evidence>
<evidence type="ECO:0000255" key="8">
    <source>
        <dbReference type="PROSITE-ProRule" id="PRU01195"/>
    </source>
</evidence>
<evidence type="ECO:0000256" key="9">
    <source>
        <dbReference type="SAM" id="MobiDB-lite"/>
    </source>
</evidence>
<evidence type="ECO:0000269" key="10">
    <source>
    </source>
</evidence>
<evidence type="ECO:0000269" key="11">
    <source>
    </source>
</evidence>
<evidence type="ECO:0000269" key="12">
    <source>
    </source>
</evidence>
<evidence type="ECO:0000269" key="13">
    <source>
    </source>
</evidence>
<evidence type="ECO:0000269" key="14">
    <source>
    </source>
</evidence>
<evidence type="ECO:0000269" key="15">
    <source>
    </source>
</evidence>
<evidence type="ECO:0000269" key="16">
    <source>
    </source>
</evidence>
<evidence type="ECO:0000269" key="17">
    <source>
    </source>
</evidence>
<evidence type="ECO:0000269" key="18">
    <source>
    </source>
</evidence>
<evidence type="ECO:0000269" key="19">
    <source>
    </source>
</evidence>
<evidence type="ECO:0000269" key="20">
    <source>
    </source>
</evidence>
<evidence type="ECO:0000269" key="21">
    <source>
    </source>
</evidence>
<evidence type="ECO:0000269" key="22">
    <source>
    </source>
</evidence>
<evidence type="ECO:0000269" key="23">
    <source>
    </source>
</evidence>
<evidence type="ECO:0000269" key="24">
    <source>
    </source>
</evidence>
<evidence type="ECO:0000303" key="25">
    <source>
    </source>
</evidence>
<evidence type="ECO:0000303" key="26">
    <source>
    </source>
</evidence>
<evidence type="ECO:0000303" key="27">
    <source>
    </source>
</evidence>
<evidence type="ECO:0000305" key="28"/>
<evidence type="ECO:0000305" key="29">
    <source>
    </source>
</evidence>
<evidence type="ECO:0007744" key="30">
    <source>
        <dbReference type="PDB" id="2CO8"/>
    </source>
</evidence>
<evidence type="ECO:0007744" key="31">
    <source>
    </source>
</evidence>
<evidence type="ECO:0007744" key="32">
    <source>
    </source>
</evidence>
<evidence type="ECO:0007744" key="33">
    <source>
    </source>
</evidence>
<evidence type="ECO:0007744" key="34">
    <source>
    </source>
</evidence>
<evidence type="ECO:0007829" key="35">
    <source>
        <dbReference type="PDB" id="2CO8"/>
    </source>
</evidence>
<evidence type="ECO:0007829" key="36">
    <source>
        <dbReference type="PDB" id="5LPN"/>
    </source>
</evidence>
<evidence type="ECO:0007829" key="37">
    <source>
        <dbReference type="PDB" id="6KU0"/>
    </source>
</evidence>
<evidence type="ECO:0007829" key="38">
    <source>
        <dbReference type="PDB" id="9EWY"/>
    </source>
</evidence>
<accession>Q8TDZ2</accession>
<accession>B7Z3R5</accession>
<accession>E1P5F0</accession>
<accession>Q7Z633</accession>
<accession>Q8IVS9</accession>
<accession>Q96G47</accession>
<accession>Q9H6X6</accession>
<accession>Q9H7I0</accession>
<accession>Q9HAA1</accession>
<accession>Q9UFF7</accession>
<proteinExistence type="evidence at protein level"/>
<feature type="chain" id="PRO_0000075842" description="[F-actin]-monooxygenase MICAL1">
    <location>
        <begin position="1"/>
        <end position="1067"/>
    </location>
</feature>
<feature type="domain" description="Calponin-homology (CH)" evidence="6">
    <location>
        <begin position="508"/>
        <end position="612"/>
    </location>
</feature>
<feature type="domain" description="LIM zinc-binding" evidence="7">
    <location>
        <begin position="695"/>
        <end position="757"/>
    </location>
</feature>
<feature type="domain" description="bMERB" evidence="8 20 21">
    <location>
        <begin position="918"/>
        <end position="1067"/>
    </location>
</feature>
<feature type="region of interest" description="Monooxygenase domain" evidence="4">
    <location>
        <begin position="1"/>
        <end position="489"/>
    </location>
</feature>
<feature type="region of interest" description="Disordered" evidence="9">
    <location>
        <begin position="645"/>
        <end position="688"/>
    </location>
</feature>
<feature type="region of interest" description="Disordered" evidence="9">
    <location>
        <begin position="755"/>
        <end position="838"/>
    </location>
</feature>
<feature type="region of interest" description="Disordered" evidence="9">
    <location>
        <begin position="867"/>
        <end position="886"/>
    </location>
</feature>
<feature type="region of interest" description="Important for interaction with RAB8A" evidence="24">
    <location>
        <begin position="901"/>
        <end position="1067"/>
    </location>
</feature>
<feature type="coiled-coil region" evidence="5">
    <location>
        <begin position="646"/>
        <end position="666"/>
    </location>
</feature>
<feature type="coiled-coil region" evidence="5">
    <location>
        <begin position="919"/>
        <end position="962"/>
    </location>
</feature>
<feature type="coiled-coil region" evidence="5">
    <location>
        <begin position="999"/>
        <end position="1027"/>
    </location>
</feature>
<feature type="compositionally biased region" description="Basic and acidic residues" evidence="9">
    <location>
        <begin position="646"/>
        <end position="663"/>
    </location>
</feature>
<feature type="compositionally biased region" description="Pro residues" evidence="9">
    <location>
        <begin position="671"/>
        <end position="684"/>
    </location>
</feature>
<feature type="compositionally biased region" description="Basic and acidic residues" evidence="9">
    <location>
        <begin position="755"/>
        <end position="766"/>
    </location>
</feature>
<feature type="compositionally biased region" description="Polar residues" evidence="9">
    <location>
        <begin position="773"/>
        <end position="789"/>
    </location>
</feature>
<feature type="compositionally biased region" description="Acidic residues" evidence="9">
    <location>
        <begin position="876"/>
        <end position="886"/>
    </location>
</feature>
<feature type="binding site" evidence="4">
    <location>
        <position position="95"/>
    </location>
    <ligand>
        <name>FAD</name>
        <dbReference type="ChEBI" id="CHEBI:57692"/>
    </ligand>
</feature>
<feature type="binding site" evidence="4">
    <location>
        <begin position="114"/>
        <end position="116"/>
    </location>
    <ligand>
        <name>FAD</name>
        <dbReference type="ChEBI" id="CHEBI:57692"/>
    </ligand>
</feature>
<feature type="binding site" evidence="4">
    <location>
        <begin position="121"/>
        <end position="123"/>
    </location>
    <ligand>
        <name>FAD</name>
        <dbReference type="ChEBI" id="CHEBI:57692"/>
    </ligand>
</feature>
<feature type="binding site" evidence="4">
    <location>
        <position position="181"/>
    </location>
    <ligand>
        <name>FAD</name>
        <dbReference type="ChEBI" id="CHEBI:57692"/>
    </ligand>
</feature>
<feature type="binding site" evidence="4">
    <location>
        <position position="293"/>
    </location>
    <ligand>
        <name>FAD</name>
        <dbReference type="ChEBI" id="CHEBI:57692"/>
    </ligand>
</feature>
<feature type="binding site" evidence="4">
    <location>
        <position position="393"/>
    </location>
    <ligand>
        <name>FAD</name>
        <dbReference type="ChEBI" id="CHEBI:57692"/>
    </ligand>
</feature>
<feature type="binding site" evidence="30">
    <location>
        <position position="697"/>
    </location>
    <ligand>
        <name>Zn(2+)</name>
        <dbReference type="ChEBI" id="CHEBI:29105"/>
        <label>1</label>
    </ligand>
</feature>
<feature type="binding site" evidence="30">
    <location>
        <position position="700"/>
    </location>
    <ligand>
        <name>Zn(2+)</name>
        <dbReference type="ChEBI" id="CHEBI:29105"/>
        <label>1</label>
    </ligand>
</feature>
<feature type="binding site" evidence="30">
    <location>
        <position position="718"/>
    </location>
    <ligand>
        <name>Zn(2+)</name>
        <dbReference type="ChEBI" id="CHEBI:29105"/>
        <label>1</label>
    </ligand>
</feature>
<feature type="binding site" evidence="30">
    <location>
        <position position="721"/>
    </location>
    <ligand>
        <name>Zn(2+)</name>
        <dbReference type="ChEBI" id="CHEBI:29105"/>
        <label>1</label>
    </ligand>
</feature>
<feature type="binding site" evidence="30">
    <location>
        <position position="724"/>
    </location>
    <ligand>
        <name>Zn(2+)</name>
        <dbReference type="ChEBI" id="CHEBI:29105"/>
        <label>2</label>
    </ligand>
</feature>
<feature type="binding site" evidence="30">
    <location>
        <position position="727"/>
    </location>
    <ligand>
        <name>Zn(2+)</name>
        <dbReference type="ChEBI" id="CHEBI:29105"/>
        <label>2</label>
    </ligand>
</feature>
<feature type="binding site" evidence="30">
    <location>
        <position position="747"/>
    </location>
    <ligand>
        <name>Zn(2+)</name>
        <dbReference type="ChEBI" id="CHEBI:29105"/>
        <label>2</label>
    </ligand>
</feature>
<feature type="binding site" evidence="30">
    <location>
        <position position="750"/>
    </location>
    <ligand>
        <name>Zn(2+)</name>
        <dbReference type="ChEBI" id="CHEBI:29105"/>
        <label>2</label>
    </ligand>
</feature>
<feature type="site" description="Important for interaction with ARHGAP26 AND ARHGAP10" evidence="24">
    <location>
        <position position="832"/>
    </location>
</feature>
<feature type="modified residue" description="Phosphothreonine" evidence="2">
    <location>
        <position position="475"/>
    </location>
</feature>
<feature type="modified residue" description="Phosphoserine" evidence="32 34">
    <location>
        <position position="617"/>
    </location>
</feature>
<feature type="modified residue" description="Phosphoserine" evidence="31 33">
    <location>
        <position position="872"/>
    </location>
</feature>
<feature type="modified residue" description="Phosphoserine" evidence="32 33">
    <location>
        <position position="875"/>
    </location>
</feature>
<feature type="modified residue" description="Phosphoserine" evidence="32 33">
    <location>
        <position position="876"/>
    </location>
</feature>
<feature type="modified residue" description="Phosphoserine" evidence="34">
    <location>
        <position position="1057"/>
    </location>
</feature>
<feature type="splice variant" id="VSP_009637" description="In isoform 3." evidence="25">
    <location>
        <begin position="1"/>
        <end position="735"/>
    </location>
</feature>
<feature type="splice variant" id="VSP_042590" description="In isoform 4." evidence="26">
    <original>M</original>
    <variation>MSCLSHSSLPSCCPPQEASM</variation>
    <location>
        <position position="1"/>
    </location>
</feature>
<feature type="splice variant" id="VSP_009639" description="In isoform 2." evidence="27">
    <location>
        <begin position="312"/>
        <end position="397"/>
    </location>
</feature>
<feature type="splice variant" id="VSP_009638" description="In isoform 3." evidence="25">
    <original>YEQHPGDGHFYCLQHLPQTDHKAEGSDRGPESP</original>
    <variation>MPRLTFAPKGWPHPPTSLHPGQVTDQTTWWLFQ</variation>
    <location>
        <begin position="736"/>
        <end position="768"/>
    </location>
</feature>
<feature type="sequence variant" id="VAR_067063" description="In dbSNP:rs4946977.">
    <original>A</original>
    <variation>S</variation>
    <location>
        <position position="12"/>
    </location>
</feature>
<feature type="sequence variant" id="VAR_050153" description="In dbSNP:rs4946977.">
    <original>A</original>
    <variation>T</variation>
    <location>
        <position position="12"/>
    </location>
</feature>
<feature type="sequence variant" id="VAR_050154" description="In dbSNP:rs34726911.">
    <original>D</original>
    <variation>A</variation>
    <location>
        <position position="153"/>
    </location>
</feature>
<feature type="sequence variant" id="VAR_067064" description="In dbSNP:rs34699467.">
    <original>R</original>
    <variation>H</variation>
    <location>
        <position position="195"/>
    </location>
</feature>
<feature type="sequence variant" id="VAR_036191" description="In a breast cancer sample; somatic mutation." evidence="16">
    <original>L</original>
    <variation>M</variation>
    <location>
        <position position="309"/>
    </location>
</feature>
<feature type="sequence variant" id="VAR_067065" description="In dbSNP:rs17854785." evidence="14">
    <original>R</original>
    <variation>C</variation>
    <location>
        <position position="453"/>
    </location>
</feature>
<feature type="sequence variant" id="VAR_067066" description="In dbSNP:rs17850590." evidence="14">
    <original>A</original>
    <variation>T</variation>
    <location>
        <position position="624"/>
    </location>
</feature>
<feature type="sequence variant" id="VAR_017903" description="In dbSNP:rs9320288.">
    <original>A</original>
    <variation>E</variation>
    <location>
        <position position="758"/>
    </location>
</feature>
<feature type="sequence variant" id="VAR_067067" description="Requires 2 nucleotide substitutions; dbSNP:rs35260632." evidence="10 13 14">
    <original>A</original>
    <variation>K</variation>
    <location>
        <position position="758"/>
    </location>
</feature>
<feature type="sequence variant" id="VAR_067068" description="In dbSNP:rs59056467.">
    <original>A</original>
    <variation>S</variation>
    <location>
        <position position="758"/>
    </location>
</feature>
<feature type="sequence variant" id="VAR_061355" description="In dbSNP:rs59056467.">
    <original>A</original>
    <variation>T</variation>
    <location>
        <position position="758"/>
    </location>
</feature>
<feature type="mutagenesis site" description="Increased association with Rab8- Rab10- and GRAPHs-positive endosomal tubules. Decreased WDR44-positive endosomal tubules formation. Loss of E-cadherin and MMP14 export and decreased CFTR export." evidence="24">
    <original>GAGPCG</original>
    <variation>WAWPCWL</variation>
    <location>
        <begin position="91"/>
        <end position="96"/>
    </location>
</feature>
<feature type="mutagenesis site" description="Abolishes interaction with ARHGAP26 AND ARHGAP10." evidence="24">
    <original>K</original>
    <variation>A</variation>
    <location>
        <position position="832"/>
    </location>
</feature>
<feature type="sequence conflict" description="In Ref. 3; BAB15124." evidence="28" ref="3">
    <original>S</original>
    <variation>C</variation>
    <location>
        <position position="767"/>
    </location>
</feature>
<feature type="sequence conflict" description="In Ref. 3; BAH12301." evidence="28" ref="3">
    <original>L</original>
    <variation>S</variation>
    <location>
        <position position="816"/>
    </location>
</feature>
<feature type="sequence conflict" description="In Ref. 3; BAH12301." evidence="28" ref="3">
    <original>E</original>
    <variation>V</variation>
    <location>
        <position position="877"/>
    </location>
</feature>
<feature type="sequence conflict" description="In Ref. 7; CAB59266." evidence="28" ref="7">
    <original>S</original>
    <variation>L</variation>
    <location>
        <position position="887"/>
    </location>
</feature>
<feature type="sequence conflict" description="In Ref. 3; BAB13949." evidence="28" ref="3">
    <original>K</original>
    <variation>N</variation>
    <location>
        <position position="981"/>
    </location>
</feature>
<feature type="helix" evidence="38">
    <location>
        <begin position="9"/>
        <end position="19"/>
    </location>
</feature>
<feature type="helix" evidence="38">
    <location>
        <begin position="23"/>
        <end position="36"/>
    </location>
</feature>
<feature type="helix" evidence="38">
    <location>
        <begin position="45"/>
        <end position="54"/>
    </location>
</feature>
<feature type="strand" evidence="38">
    <location>
        <begin position="58"/>
        <end position="60"/>
    </location>
</feature>
<feature type="helix" evidence="38">
    <location>
        <begin position="62"/>
        <end position="71"/>
    </location>
</feature>
<feature type="turn" evidence="38">
    <location>
        <begin position="74"/>
        <end position="84"/>
    </location>
</feature>
<feature type="strand" evidence="38">
    <location>
        <begin position="86"/>
        <end position="90"/>
    </location>
</feature>
<feature type="helix" evidence="38">
    <location>
        <begin position="94"/>
        <end position="105"/>
    </location>
</feature>
<feature type="strand" evidence="38">
    <location>
        <begin position="109"/>
        <end position="115"/>
    </location>
</feature>
<feature type="strand" evidence="38">
    <location>
        <begin position="124"/>
        <end position="126"/>
    </location>
</feature>
<feature type="helix" evidence="38">
    <location>
        <begin position="129"/>
        <end position="137"/>
    </location>
</feature>
<feature type="helix" evidence="38">
    <location>
        <begin position="140"/>
        <end position="143"/>
    </location>
</feature>
<feature type="turn" evidence="38">
    <location>
        <begin position="145"/>
        <end position="148"/>
    </location>
</feature>
<feature type="strand" evidence="38">
    <location>
        <begin position="154"/>
        <end position="156"/>
    </location>
</feature>
<feature type="helix" evidence="38">
    <location>
        <begin position="157"/>
        <end position="171"/>
    </location>
</feature>
<feature type="strand" evidence="38">
    <location>
        <begin position="174"/>
        <end position="178"/>
    </location>
</feature>
<feature type="strand" evidence="38">
    <location>
        <begin position="180"/>
        <end position="185"/>
    </location>
</feature>
<feature type="strand" evidence="38">
    <location>
        <begin position="194"/>
        <end position="200"/>
    </location>
</feature>
<feature type="helix" evidence="38">
    <location>
        <begin position="204"/>
        <end position="207"/>
    </location>
</feature>
<feature type="strand" evidence="38">
    <location>
        <begin position="211"/>
        <end position="216"/>
    </location>
</feature>
<feature type="strand" evidence="38">
    <location>
        <begin position="229"/>
        <end position="232"/>
    </location>
</feature>
<feature type="strand" evidence="38">
    <location>
        <begin position="238"/>
        <end position="245"/>
    </location>
</feature>
<feature type="helix" evidence="38">
    <location>
        <begin position="250"/>
        <end position="253"/>
    </location>
</feature>
<feature type="strand" evidence="38">
    <location>
        <begin position="259"/>
        <end position="261"/>
    </location>
</feature>
<feature type="turn" evidence="38">
    <location>
        <begin position="262"/>
        <end position="264"/>
    </location>
</feature>
<feature type="helix" evidence="38">
    <location>
        <begin position="267"/>
        <end position="276"/>
    </location>
</feature>
<feature type="strand" evidence="38">
    <location>
        <begin position="281"/>
        <end position="298"/>
    </location>
</feature>
<feature type="helix" evidence="38">
    <location>
        <begin position="300"/>
        <end position="305"/>
    </location>
</feature>
<feature type="strand" evidence="38">
    <location>
        <begin position="308"/>
        <end position="311"/>
    </location>
</feature>
<feature type="helix" evidence="38">
    <location>
        <begin position="316"/>
        <end position="319"/>
    </location>
</feature>
<feature type="turn" evidence="38">
    <location>
        <begin position="322"/>
        <end position="324"/>
    </location>
</feature>
<feature type="helix" evidence="38">
    <location>
        <begin position="327"/>
        <end position="341"/>
    </location>
</feature>
<feature type="turn" evidence="38">
    <location>
        <begin position="342"/>
        <end position="346"/>
    </location>
</feature>
<feature type="strand" evidence="38">
    <location>
        <begin position="357"/>
        <end position="365"/>
    </location>
</feature>
<feature type="strand" evidence="38">
    <location>
        <begin position="369"/>
        <end position="373"/>
    </location>
</feature>
<feature type="strand" evidence="38">
    <location>
        <begin position="375"/>
        <end position="381"/>
    </location>
</feature>
<feature type="strand" evidence="38">
    <location>
        <begin position="384"/>
        <end position="390"/>
    </location>
</feature>
<feature type="helix" evidence="38">
    <location>
        <begin position="392"/>
        <end position="394"/>
    </location>
</feature>
<feature type="helix" evidence="38">
    <location>
        <begin position="400"/>
        <end position="402"/>
    </location>
</feature>
<feature type="helix" evidence="38">
    <location>
        <begin position="405"/>
        <end position="424"/>
    </location>
</feature>
<feature type="helix" evidence="38">
    <location>
        <begin position="429"/>
        <end position="440"/>
    </location>
</feature>
<feature type="helix" evidence="38">
    <location>
        <begin position="441"/>
        <end position="445"/>
    </location>
</feature>
<feature type="strand" evidence="38">
    <location>
        <begin position="448"/>
        <end position="451"/>
    </location>
</feature>
<feature type="helix" evidence="38">
    <location>
        <begin position="455"/>
        <end position="457"/>
    </location>
</feature>
<feature type="helix" evidence="38">
    <location>
        <begin position="462"/>
        <end position="464"/>
    </location>
</feature>
<feature type="helix" evidence="38">
    <location>
        <begin position="476"/>
        <end position="482"/>
    </location>
</feature>
<feature type="strand" evidence="38">
    <location>
        <begin position="483"/>
        <end position="485"/>
    </location>
</feature>
<feature type="helix" evidence="38">
    <location>
        <begin position="510"/>
        <end position="522"/>
    </location>
</feature>
<feature type="strand" evidence="38">
    <location>
        <begin position="531"/>
        <end position="535"/>
    </location>
</feature>
<feature type="strand" evidence="38">
    <location>
        <begin position="538"/>
        <end position="540"/>
    </location>
</feature>
<feature type="helix" evidence="38">
    <location>
        <begin position="541"/>
        <end position="550"/>
    </location>
</feature>
<feature type="strand" evidence="38">
    <location>
        <begin position="551"/>
        <end position="554"/>
    </location>
</feature>
<feature type="helix" evidence="38">
    <location>
        <begin position="557"/>
        <end position="561"/>
    </location>
</feature>
<feature type="helix" evidence="38">
    <location>
        <begin position="567"/>
        <end position="579"/>
    </location>
</feature>
<feature type="helix" evidence="38">
    <location>
        <begin position="588"/>
        <end position="593"/>
    </location>
</feature>
<feature type="helix" evidence="38">
    <location>
        <begin position="597"/>
        <end position="610"/>
    </location>
</feature>
<feature type="helix" evidence="38">
    <location>
        <begin position="631"/>
        <end position="644"/>
    </location>
</feature>
<feature type="turn" evidence="38">
    <location>
        <begin position="698"/>
        <end position="700"/>
    </location>
</feature>
<feature type="turn" evidence="38">
    <location>
        <begin position="706"/>
        <end position="708"/>
    </location>
</feature>
<feature type="strand" evidence="38">
    <location>
        <begin position="709"/>
        <end position="712"/>
    </location>
</feature>
<feature type="strand" evidence="38">
    <location>
        <begin position="715"/>
        <end position="718"/>
    </location>
</feature>
<feature type="turn" evidence="35">
    <location>
        <begin position="719"/>
        <end position="721"/>
    </location>
</feature>
<feature type="turn" evidence="38">
    <location>
        <begin position="725"/>
        <end position="727"/>
    </location>
</feature>
<feature type="strand" evidence="38">
    <location>
        <begin position="735"/>
        <end position="739"/>
    </location>
</feature>
<feature type="turn" evidence="38">
    <location>
        <begin position="740"/>
        <end position="743"/>
    </location>
</feature>
<feature type="strand" evidence="38">
    <location>
        <begin position="744"/>
        <end position="747"/>
    </location>
</feature>
<feature type="turn" evidence="38">
    <location>
        <begin position="748"/>
        <end position="750"/>
    </location>
</feature>
<feature type="helix" evidence="37">
    <location>
        <begin position="810"/>
        <end position="817"/>
    </location>
</feature>
<feature type="helix" evidence="36">
    <location>
        <begin position="919"/>
        <end position="959"/>
    </location>
</feature>
<feature type="helix" evidence="36">
    <location>
        <begin position="963"/>
        <end position="972"/>
    </location>
</feature>
<feature type="helix" evidence="36">
    <location>
        <begin position="974"/>
        <end position="1013"/>
    </location>
</feature>
<feature type="strand" evidence="38">
    <location>
        <begin position="1019"/>
        <end position="1021"/>
    </location>
</feature>
<feature type="helix" evidence="36">
    <location>
        <begin position="1027"/>
        <end position="1059"/>
    </location>
</feature>
<gene>
    <name type="primary">MICAL1</name>
    <name type="synonym">MICAL</name>
    <name type="synonym">NICAL</name>
</gene>
<keyword id="KW-0002">3D-structure</keyword>
<keyword id="KW-0009">Actin-binding</keyword>
<keyword id="KW-0025">Alternative splicing</keyword>
<keyword id="KW-0175">Coiled coil</keyword>
<keyword id="KW-0963">Cytoplasm</keyword>
<keyword id="KW-0206">Cytoskeleton</keyword>
<keyword id="KW-0967">Endosome</keyword>
<keyword id="KW-0274">FAD</keyword>
<keyword id="KW-0285">Flavoprotein</keyword>
<keyword id="KW-0440">LIM domain</keyword>
<keyword id="KW-0472">Membrane</keyword>
<keyword id="KW-0479">Metal-binding</keyword>
<keyword id="KW-0503">Monooxygenase</keyword>
<keyword id="KW-0521">NADP</keyword>
<keyword id="KW-0560">Oxidoreductase</keyword>
<keyword id="KW-0597">Phosphoprotein</keyword>
<keyword id="KW-1267">Proteomics identification</keyword>
<keyword id="KW-1185">Reference proteome</keyword>
<keyword id="KW-0862">Zinc</keyword>
<organism>
    <name type="scientific">Homo sapiens</name>
    <name type="common">Human</name>
    <dbReference type="NCBI Taxonomy" id="9606"/>
    <lineage>
        <taxon>Eukaryota</taxon>
        <taxon>Metazoa</taxon>
        <taxon>Chordata</taxon>
        <taxon>Craniata</taxon>
        <taxon>Vertebrata</taxon>
        <taxon>Euteleostomi</taxon>
        <taxon>Mammalia</taxon>
        <taxon>Eutheria</taxon>
        <taxon>Euarchontoglires</taxon>
        <taxon>Primates</taxon>
        <taxon>Haplorrhini</taxon>
        <taxon>Catarrhini</taxon>
        <taxon>Hominidae</taxon>
        <taxon>Homo</taxon>
    </lineage>
</organism>
<reference key="1">
    <citation type="journal article" date="2002" name="J. Biol. Chem.">
        <title>MICAL, a novel CasL interacting molecule, associates with vimentin.</title>
        <authorList>
            <person name="Suzuki T."/>
            <person name="Nakamoto T."/>
            <person name="Ogawa S."/>
            <person name="Seo S."/>
            <person name="Matsumura T."/>
            <person name="Tachibana K."/>
            <person name="Morimoto C."/>
            <person name="Hirai H."/>
        </authorList>
    </citation>
    <scope>NUCLEOTIDE SEQUENCE [MRNA] (ISOFORM 1)</scope>
    <scope>SUBCELLULAR LOCATION</scope>
    <scope>TISSUE SPECIFICITY</scope>
    <scope>INTERACTION WITH NEDD9 AND VIM</scope>
    <scope>VARIANT LYS-758</scope>
</reference>
<reference key="2">
    <citation type="journal article" date="2000" name="DNA Res.">
        <title>Characterization of long cDNA clones from human adult spleen.</title>
        <authorList>
            <person name="Hattori A."/>
            <person name="Okumura K."/>
            <person name="Nagase T."/>
            <person name="Kikuno R."/>
            <person name="Hirosawa M."/>
            <person name="Ohara O."/>
        </authorList>
    </citation>
    <scope>NUCLEOTIDE SEQUENCE [LARGE SCALE MRNA] (ISOFORM 3)</scope>
    <source>
        <tissue>Spleen</tissue>
    </source>
</reference>
<reference key="3">
    <citation type="journal article" date="2004" name="Nat. Genet.">
        <title>Complete sequencing and characterization of 21,243 full-length human cDNAs.</title>
        <authorList>
            <person name="Ota T."/>
            <person name="Suzuki Y."/>
            <person name="Nishikawa T."/>
            <person name="Otsuki T."/>
            <person name="Sugiyama T."/>
            <person name="Irie R."/>
            <person name="Wakamatsu A."/>
            <person name="Hayashi K."/>
            <person name="Sato H."/>
            <person name="Nagai K."/>
            <person name="Kimura K."/>
            <person name="Makita H."/>
            <person name="Sekine M."/>
            <person name="Obayashi M."/>
            <person name="Nishi T."/>
            <person name="Shibahara T."/>
            <person name="Tanaka T."/>
            <person name="Ishii S."/>
            <person name="Yamamoto J."/>
            <person name="Saito K."/>
            <person name="Kawai Y."/>
            <person name="Isono Y."/>
            <person name="Nakamura Y."/>
            <person name="Nagahari K."/>
            <person name="Murakami K."/>
            <person name="Yasuda T."/>
            <person name="Iwayanagi T."/>
            <person name="Wagatsuma M."/>
            <person name="Shiratori A."/>
            <person name="Sudo H."/>
            <person name="Hosoiri T."/>
            <person name="Kaku Y."/>
            <person name="Kodaira H."/>
            <person name="Kondo H."/>
            <person name="Sugawara M."/>
            <person name="Takahashi M."/>
            <person name="Kanda K."/>
            <person name="Yokoi T."/>
            <person name="Furuya T."/>
            <person name="Kikkawa E."/>
            <person name="Omura Y."/>
            <person name="Abe K."/>
            <person name="Kamihara K."/>
            <person name="Katsuta N."/>
            <person name="Sato K."/>
            <person name="Tanikawa M."/>
            <person name="Yamazaki M."/>
            <person name="Ninomiya K."/>
            <person name="Ishibashi T."/>
            <person name="Yamashita H."/>
            <person name="Murakawa K."/>
            <person name="Fujimori K."/>
            <person name="Tanai H."/>
            <person name="Kimata M."/>
            <person name="Watanabe M."/>
            <person name="Hiraoka S."/>
            <person name="Chiba Y."/>
            <person name="Ishida S."/>
            <person name="Ono Y."/>
            <person name="Takiguchi S."/>
            <person name="Watanabe S."/>
            <person name="Yosida M."/>
            <person name="Hotuta T."/>
            <person name="Kusano J."/>
            <person name="Kanehori K."/>
            <person name="Takahashi-Fujii A."/>
            <person name="Hara H."/>
            <person name="Tanase T.-O."/>
            <person name="Nomura Y."/>
            <person name="Togiya S."/>
            <person name="Komai F."/>
            <person name="Hara R."/>
            <person name="Takeuchi K."/>
            <person name="Arita M."/>
            <person name="Imose N."/>
            <person name="Musashino K."/>
            <person name="Yuuki H."/>
            <person name="Oshima A."/>
            <person name="Sasaki N."/>
            <person name="Aotsuka S."/>
            <person name="Yoshikawa Y."/>
            <person name="Matsunawa H."/>
            <person name="Ichihara T."/>
            <person name="Shiohata N."/>
            <person name="Sano S."/>
            <person name="Moriya S."/>
            <person name="Momiyama H."/>
            <person name="Satoh N."/>
            <person name="Takami S."/>
            <person name="Terashima Y."/>
            <person name="Suzuki O."/>
            <person name="Nakagawa S."/>
            <person name="Senoh A."/>
            <person name="Mizoguchi H."/>
            <person name="Goto Y."/>
            <person name="Shimizu F."/>
            <person name="Wakebe H."/>
            <person name="Hishigaki H."/>
            <person name="Watanabe T."/>
            <person name="Sugiyama A."/>
            <person name="Takemoto M."/>
            <person name="Kawakami B."/>
            <person name="Yamazaki M."/>
            <person name="Watanabe K."/>
            <person name="Kumagai A."/>
            <person name="Itakura S."/>
            <person name="Fukuzumi Y."/>
            <person name="Fujimori Y."/>
            <person name="Komiyama M."/>
            <person name="Tashiro H."/>
            <person name="Tanigami A."/>
            <person name="Fujiwara T."/>
            <person name="Ono T."/>
            <person name="Yamada K."/>
            <person name="Fujii Y."/>
            <person name="Ozaki K."/>
            <person name="Hirao M."/>
            <person name="Ohmori Y."/>
            <person name="Kawabata A."/>
            <person name="Hikiji T."/>
            <person name="Kobatake N."/>
            <person name="Inagaki H."/>
            <person name="Ikema Y."/>
            <person name="Okamoto S."/>
            <person name="Okitani R."/>
            <person name="Kawakami T."/>
            <person name="Noguchi S."/>
            <person name="Itoh T."/>
            <person name="Shigeta K."/>
            <person name="Senba T."/>
            <person name="Matsumura K."/>
            <person name="Nakajima Y."/>
            <person name="Mizuno T."/>
            <person name="Morinaga M."/>
            <person name="Sasaki M."/>
            <person name="Togashi T."/>
            <person name="Oyama M."/>
            <person name="Hata H."/>
            <person name="Watanabe M."/>
            <person name="Komatsu T."/>
            <person name="Mizushima-Sugano J."/>
            <person name="Satoh T."/>
            <person name="Shirai Y."/>
            <person name="Takahashi Y."/>
            <person name="Nakagawa K."/>
            <person name="Okumura K."/>
            <person name="Nagase T."/>
            <person name="Nomura N."/>
            <person name="Kikuchi H."/>
            <person name="Masuho Y."/>
            <person name="Yamashita R."/>
            <person name="Nakai K."/>
            <person name="Yada T."/>
            <person name="Nakamura Y."/>
            <person name="Ohara O."/>
            <person name="Isogai T."/>
            <person name="Sugano S."/>
        </authorList>
    </citation>
    <scope>NUCLEOTIDE SEQUENCE [LARGE SCALE MRNA] (ISOFORMS 1 AND 4)</scope>
    <scope>VARIANTS LYS-758 AND LYS-758</scope>
    <source>
        <tissue>Colon mucosa</tissue>
        <tissue>Embryo</tissue>
        <tissue>Spleen</tissue>
        <tissue>Thalamus</tissue>
    </source>
</reference>
<reference key="4">
    <citation type="journal article" date="2003" name="Nature">
        <title>The DNA sequence and analysis of human chromosome 6.</title>
        <authorList>
            <person name="Mungall A.J."/>
            <person name="Palmer S.A."/>
            <person name="Sims S.K."/>
            <person name="Edwards C.A."/>
            <person name="Ashurst J.L."/>
            <person name="Wilming L."/>
            <person name="Jones M.C."/>
            <person name="Horton R."/>
            <person name="Hunt S.E."/>
            <person name="Scott C.E."/>
            <person name="Gilbert J.G.R."/>
            <person name="Clamp M.E."/>
            <person name="Bethel G."/>
            <person name="Milne S."/>
            <person name="Ainscough R."/>
            <person name="Almeida J.P."/>
            <person name="Ambrose K.D."/>
            <person name="Andrews T.D."/>
            <person name="Ashwell R.I.S."/>
            <person name="Babbage A.K."/>
            <person name="Bagguley C.L."/>
            <person name="Bailey J."/>
            <person name="Banerjee R."/>
            <person name="Barker D.J."/>
            <person name="Barlow K.F."/>
            <person name="Bates K."/>
            <person name="Beare D.M."/>
            <person name="Beasley H."/>
            <person name="Beasley O."/>
            <person name="Bird C.P."/>
            <person name="Blakey S.E."/>
            <person name="Bray-Allen S."/>
            <person name="Brook J."/>
            <person name="Brown A.J."/>
            <person name="Brown J.Y."/>
            <person name="Burford D.C."/>
            <person name="Burrill W."/>
            <person name="Burton J."/>
            <person name="Carder C."/>
            <person name="Carter N.P."/>
            <person name="Chapman J.C."/>
            <person name="Clark S.Y."/>
            <person name="Clark G."/>
            <person name="Clee C.M."/>
            <person name="Clegg S."/>
            <person name="Cobley V."/>
            <person name="Collier R.E."/>
            <person name="Collins J.E."/>
            <person name="Colman L.K."/>
            <person name="Corby N.R."/>
            <person name="Coville G.J."/>
            <person name="Culley K.M."/>
            <person name="Dhami P."/>
            <person name="Davies J."/>
            <person name="Dunn M."/>
            <person name="Earthrowl M.E."/>
            <person name="Ellington A.E."/>
            <person name="Evans K.A."/>
            <person name="Faulkner L."/>
            <person name="Francis M.D."/>
            <person name="Frankish A."/>
            <person name="Frankland J."/>
            <person name="French L."/>
            <person name="Garner P."/>
            <person name="Garnett J."/>
            <person name="Ghori M.J."/>
            <person name="Gilby L.M."/>
            <person name="Gillson C.J."/>
            <person name="Glithero R.J."/>
            <person name="Grafham D.V."/>
            <person name="Grant M."/>
            <person name="Gribble S."/>
            <person name="Griffiths C."/>
            <person name="Griffiths M.N.D."/>
            <person name="Hall R."/>
            <person name="Halls K.S."/>
            <person name="Hammond S."/>
            <person name="Harley J.L."/>
            <person name="Hart E.A."/>
            <person name="Heath P.D."/>
            <person name="Heathcott R."/>
            <person name="Holmes S.J."/>
            <person name="Howden P.J."/>
            <person name="Howe K.L."/>
            <person name="Howell G.R."/>
            <person name="Huckle E."/>
            <person name="Humphray S.J."/>
            <person name="Humphries M.D."/>
            <person name="Hunt A.R."/>
            <person name="Johnson C.M."/>
            <person name="Joy A.A."/>
            <person name="Kay M."/>
            <person name="Keenan S.J."/>
            <person name="Kimberley A.M."/>
            <person name="King A."/>
            <person name="Laird G.K."/>
            <person name="Langford C."/>
            <person name="Lawlor S."/>
            <person name="Leongamornlert D.A."/>
            <person name="Leversha M."/>
            <person name="Lloyd C.R."/>
            <person name="Lloyd D.M."/>
            <person name="Loveland J.E."/>
            <person name="Lovell J."/>
            <person name="Martin S."/>
            <person name="Mashreghi-Mohammadi M."/>
            <person name="Maslen G.L."/>
            <person name="Matthews L."/>
            <person name="McCann O.T."/>
            <person name="McLaren S.J."/>
            <person name="McLay K."/>
            <person name="McMurray A."/>
            <person name="Moore M.J.F."/>
            <person name="Mullikin J.C."/>
            <person name="Niblett D."/>
            <person name="Nickerson T."/>
            <person name="Novik K.L."/>
            <person name="Oliver K."/>
            <person name="Overton-Larty E.K."/>
            <person name="Parker A."/>
            <person name="Patel R."/>
            <person name="Pearce A.V."/>
            <person name="Peck A.I."/>
            <person name="Phillimore B.J.C.T."/>
            <person name="Phillips S."/>
            <person name="Plumb R.W."/>
            <person name="Porter K.M."/>
            <person name="Ramsey Y."/>
            <person name="Ranby S.A."/>
            <person name="Rice C.M."/>
            <person name="Ross M.T."/>
            <person name="Searle S.M."/>
            <person name="Sehra H.K."/>
            <person name="Sheridan E."/>
            <person name="Skuce C.D."/>
            <person name="Smith S."/>
            <person name="Smith M."/>
            <person name="Spraggon L."/>
            <person name="Squares S.L."/>
            <person name="Steward C.A."/>
            <person name="Sycamore N."/>
            <person name="Tamlyn-Hall G."/>
            <person name="Tester J."/>
            <person name="Theaker A.J."/>
            <person name="Thomas D.W."/>
            <person name="Thorpe A."/>
            <person name="Tracey A."/>
            <person name="Tromans A."/>
            <person name="Tubby B."/>
            <person name="Wall M."/>
            <person name="Wallis J.M."/>
            <person name="West A.P."/>
            <person name="White S.S."/>
            <person name="Whitehead S.L."/>
            <person name="Whittaker H."/>
            <person name="Wild A."/>
            <person name="Willey D.J."/>
            <person name="Wilmer T.E."/>
            <person name="Wood J.M."/>
            <person name="Wray P.W."/>
            <person name="Wyatt J.C."/>
            <person name="Young L."/>
            <person name="Younger R.M."/>
            <person name="Bentley D.R."/>
            <person name="Coulson A."/>
            <person name="Durbin R.M."/>
            <person name="Hubbard T."/>
            <person name="Sulston J.E."/>
            <person name="Dunham I."/>
            <person name="Rogers J."/>
            <person name="Beck S."/>
        </authorList>
    </citation>
    <scope>NUCLEOTIDE SEQUENCE [LARGE SCALE GENOMIC DNA]</scope>
</reference>
<reference key="5">
    <citation type="submission" date="2005-09" db="EMBL/GenBank/DDBJ databases">
        <authorList>
            <person name="Mural R.J."/>
            <person name="Istrail S."/>
            <person name="Sutton G.G."/>
            <person name="Florea L."/>
            <person name="Halpern A.L."/>
            <person name="Mobarry C.M."/>
            <person name="Lippert R."/>
            <person name="Walenz B."/>
            <person name="Shatkay H."/>
            <person name="Dew I."/>
            <person name="Miller J.R."/>
            <person name="Flanigan M.J."/>
            <person name="Edwards N.J."/>
            <person name="Bolanos R."/>
            <person name="Fasulo D."/>
            <person name="Halldorsson B.V."/>
            <person name="Hannenhalli S."/>
            <person name="Turner R."/>
            <person name="Yooseph S."/>
            <person name="Lu F."/>
            <person name="Nusskern D.R."/>
            <person name="Shue B.C."/>
            <person name="Zheng X.H."/>
            <person name="Zhong F."/>
            <person name="Delcher A.L."/>
            <person name="Huson D.H."/>
            <person name="Kravitz S.A."/>
            <person name="Mouchard L."/>
            <person name="Reinert K."/>
            <person name="Remington K.A."/>
            <person name="Clark A.G."/>
            <person name="Waterman M.S."/>
            <person name="Eichler E.E."/>
            <person name="Adams M.D."/>
            <person name="Hunkapiller M.W."/>
            <person name="Myers E.W."/>
            <person name="Venter J.C."/>
        </authorList>
    </citation>
    <scope>NUCLEOTIDE SEQUENCE [LARGE SCALE GENOMIC DNA]</scope>
</reference>
<reference key="6">
    <citation type="journal article" date="2004" name="Genome Res.">
        <title>The status, quality, and expansion of the NIH full-length cDNA project: the Mammalian Gene Collection (MGC).</title>
        <authorList>
            <consortium name="The MGC Project Team"/>
        </authorList>
    </citation>
    <scope>NUCLEOTIDE SEQUENCE [LARGE SCALE MRNA] (ISOFORMS 1 AND 2)</scope>
    <scope>VARIANTS CYS-453; THR-624 AND LYS-758</scope>
    <source>
        <tissue>Blood</tissue>
        <tissue>Lymph</tissue>
        <tissue>Uterus</tissue>
    </source>
</reference>
<reference key="7">
    <citation type="journal article" date="2007" name="BMC Genomics">
        <title>The full-ORF clone resource of the German cDNA consortium.</title>
        <authorList>
            <person name="Bechtel S."/>
            <person name="Rosenfelder H."/>
            <person name="Duda A."/>
            <person name="Schmidt C.P."/>
            <person name="Ernst U."/>
            <person name="Wellenreuther R."/>
            <person name="Mehrle A."/>
            <person name="Schuster C."/>
            <person name="Bahr A."/>
            <person name="Bloecker H."/>
            <person name="Heubner D."/>
            <person name="Hoerlein A."/>
            <person name="Michel G."/>
            <person name="Wedler H."/>
            <person name="Koehrer K."/>
            <person name="Ottenwaelder B."/>
            <person name="Poustka A."/>
            <person name="Wiemann S."/>
            <person name="Schupp I."/>
        </authorList>
    </citation>
    <scope>NUCLEOTIDE SEQUENCE [LARGE SCALE MRNA] OF 422-1067 (ISOFORMS 1/2)</scope>
    <source>
        <tissue>Testis</tissue>
    </source>
</reference>
<reference key="8">
    <citation type="journal article" date="2002" name="Cell">
        <title>MICALs, a family of conserved flavoprotein oxidoreductases, function in plexin-mediated axonal repulsion.</title>
        <authorList>
            <person name="Terman J.R."/>
            <person name="Mao T."/>
            <person name="Pasterkamp R.J."/>
            <person name="Yu H.-H."/>
            <person name="Kolodkin A.L."/>
        </authorList>
    </citation>
    <scope>INTERACTION WITH PLXNA3</scope>
</reference>
<reference key="9">
    <citation type="journal article" date="2003" name="Biochem. Biophys. Res. Commun.">
        <title>MICAL-1 isoforms, novel rab1 interacting proteins.</title>
        <authorList>
            <person name="Weide T."/>
            <person name="Teuber J."/>
            <person name="Bayer M."/>
            <person name="Barnekow A."/>
        </authorList>
    </citation>
    <scope>ALTERNATIVE SPLICING (ISOFORMS 1 AND 2)</scope>
    <scope>SUBCELLULAR LOCATION</scope>
    <scope>INTERACTION WITH VIM</scope>
</reference>
<reference key="10">
    <citation type="journal article" date="2005" name="Biochem. Biophys. Res. Commun.">
        <title>The MICAL proteins and rab1: a possible link to the cytoskeleton?</title>
        <authorList>
            <person name="Fischer J."/>
            <person name="Weide T."/>
            <person name="Barnekow A."/>
        </authorList>
    </citation>
    <scope>INTERACTION WITH RAB1B</scope>
    <scope>SUBCELLULAR LOCATION</scope>
</reference>
<reference key="11">
    <citation type="journal article" date="2006" name="Cell">
        <title>Global, in vivo, and site-specific phosphorylation dynamics in signaling networks.</title>
        <authorList>
            <person name="Olsen J.V."/>
            <person name="Blagoev B."/>
            <person name="Gnad F."/>
            <person name="Macek B."/>
            <person name="Kumar C."/>
            <person name="Mortensen P."/>
            <person name="Mann M."/>
        </authorList>
    </citation>
    <scope>PHOSPHORYLATION [LARGE SCALE ANALYSIS] AT SER-872</scope>
    <scope>IDENTIFICATION BY MASS SPECTROMETRY [LARGE SCALE ANALYSIS]</scope>
    <source>
        <tissue>Cervix carcinoma</tissue>
    </source>
</reference>
<reference key="12">
    <citation type="journal article" date="2008" name="J. Neurosci.">
        <title>Release of MICAL autoinhibition by semaphorin-plexin signaling promotes interaction with collapsin response mediator protein.</title>
        <authorList>
            <person name="Schmidt E.F."/>
            <person name="Shim S.O."/>
            <person name="Strittmatter S.M."/>
        </authorList>
    </citation>
    <scope>FUNCTION</scope>
</reference>
<reference key="13">
    <citation type="journal article" date="2009" name="Sci. Signal.">
        <title>Quantitative phosphoproteomic analysis of T cell receptor signaling reveals system-wide modulation of protein-protein interactions.</title>
        <authorList>
            <person name="Mayya V."/>
            <person name="Lundgren D.H."/>
            <person name="Hwang S.-I."/>
            <person name="Rezaul K."/>
            <person name="Wu L."/>
            <person name="Eng J.K."/>
            <person name="Rodionov V."/>
            <person name="Han D.K."/>
        </authorList>
    </citation>
    <scope>PHOSPHORYLATION [LARGE SCALE ANALYSIS] AT SER-617; SER-875 AND SER-876</scope>
    <scope>IDENTIFICATION BY MASS SPECTROMETRY [LARGE SCALE ANALYSIS]</scope>
    <source>
        <tissue>Leukemic T-cell</tissue>
    </source>
</reference>
<reference key="14">
    <citation type="journal article" date="2011" name="Arch. Biochem. Biophys.">
        <title>Kinetic and spectroscopic characterization of the putative monooxygenase domain of human MICAL-1.</title>
        <authorList>
            <person name="Zucchini D."/>
            <person name="Caprini G."/>
            <person name="Pasterkamp R.J."/>
            <person name="Tedeschi G."/>
            <person name="Vanoni M.A."/>
        </authorList>
    </citation>
    <scope>FUNCTION</scope>
    <scope>COFACTOR</scope>
    <scope>BIOPHYSICOCHEMICAL PROPERTIES</scope>
    <scope>CAUTION</scope>
    <scope>CATALYTIC ACTIVITY</scope>
</reference>
<reference key="15">
    <citation type="journal article" date="2011" name="BMC Syst. Biol.">
        <title>Initial characterization of the human central proteome.</title>
        <authorList>
            <person name="Burkard T.R."/>
            <person name="Planyavsky M."/>
            <person name="Kaupe I."/>
            <person name="Breitwieser F.P."/>
            <person name="Buerckstuemmer T."/>
            <person name="Bennett K.L."/>
            <person name="Superti-Furga G."/>
            <person name="Colinge J."/>
        </authorList>
    </citation>
    <scope>IDENTIFICATION BY MASS SPECTROMETRY [LARGE SCALE ANALYSIS]</scope>
</reference>
<reference key="16">
    <citation type="journal article" date="2011" name="Sci. Signal.">
        <title>System-wide temporal characterization of the proteome and phosphoproteome of human embryonic stem cell differentiation.</title>
        <authorList>
            <person name="Rigbolt K.T."/>
            <person name="Prokhorova T.A."/>
            <person name="Akimov V."/>
            <person name="Henningsen J."/>
            <person name="Johansen P.T."/>
            <person name="Kratchmarova I."/>
            <person name="Kassem M."/>
            <person name="Mann M."/>
            <person name="Olsen J.V."/>
            <person name="Blagoev B."/>
        </authorList>
    </citation>
    <scope>PHOSPHORYLATION [LARGE SCALE ANALYSIS] AT SER-872; SER-875 AND SER-876</scope>
    <scope>IDENTIFICATION BY MASS SPECTROMETRY [LARGE SCALE ANALYSIS]</scope>
</reference>
<reference key="17">
    <citation type="journal article" date="2013" name="J. Proteome Res.">
        <title>Toward a comprehensive characterization of a human cancer cell phosphoproteome.</title>
        <authorList>
            <person name="Zhou H."/>
            <person name="Di Palma S."/>
            <person name="Preisinger C."/>
            <person name="Peng M."/>
            <person name="Polat A.N."/>
            <person name="Heck A.J."/>
            <person name="Mohammed S."/>
        </authorList>
    </citation>
    <scope>PHOSPHORYLATION [LARGE SCALE ANALYSIS] AT SER-617 AND SER-1057</scope>
    <scope>IDENTIFICATION BY MASS SPECTROMETRY [LARGE SCALE ANALYSIS]</scope>
    <source>
        <tissue>Erythroleukemia</tissue>
    </source>
</reference>
<reference key="18">
    <citation type="journal article" date="2014" name="Cell">
        <title>Redox modification of nuclear actin by MICAL-2 regulates SRF signaling.</title>
        <authorList>
            <person name="Lundquist M.R."/>
            <person name="Storaska A.J."/>
            <person name="Liu T.C."/>
            <person name="Larsen S.D."/>
            <person name="Evans T."/>
            <person name="Neubig R.R."/>
            <person name="Jaffrey S.R."/>
        </authorList>
    </citation>
    <scope>SUBCELLULAR LOCATION</scope>
</reference>
<reference key="19">
    <citation type="journal article" date="2016" name="Arch. Biochem. Biophys.">
        <title>Properties and catalytic activities of MICAL1, the flavoenzyme involved in cytoskeleton dynamics, and modulation by its CH, LIM and C-terminal domains.</title>
        <authorList>
            <person name="Vitali T."/>
            <person name="Maffioli E."/>
            <person name="Tedeschi G."/>
            <person name="Vanoni M.A."/>
        </authorList>
    </citation>
    <scope>FUNCTION AS NADPH OXIDASE</scope>
    <scope>BIOPHYSICOCHEMICAL PROPERTIES</scope>
    <scope>CAUTION</scope>
    <scope>CATALYTIC ACTIVITY</scope>
</reference>
<reference key="20">
    <citation type="journal article" date="2018" name="Sci. Rep.">
        <title>The MICALs are a Family of F-actin Dismantling Oxidoreductases Conserved from Drosophila to Humans.</title>
        <authorList>
            <person name="Wu H."/>
            <person name="Yesilyurt H.G."/>
            <person name="Yoon J."/>
            <person name="Terman J.R."/>
        </authorList>
    </citation>
    <scope>FUNCTION</scope>
    <scope>CATALYTIC ACTIVITY</scope>
</reference>
<reference key="21">
    <citation type="submission" date="2005-08" db="PDB data bank">
        <title>Solution structure of the CH domain of human NEDD9-interacting protein with calponin homology and LIM domains.</title>
        <authorList>
            <consortium name="RIKEN structural genomics initiative (RSGI)"/>
        </authorList>
    </citation>
    <scope>STRUCTURE BY NMR OF 506-613</scope>
</reference>
<reference key="22">
    <citation type="journal article" date="2019" name="Structure">
        <title>Rab35/ACAP2 and Rab35/RUSC2 Complex Structures Reveal Molecular Basis for Effector Recognition by Rab35 GTPase.</title>
        <authorList>
            <person name="Lin L."/>
            <person name="Shi Y."/>
            <person name="Wang M."/>
            <person name="Wang C."/>
            <person name="Zhu J."/>
            <person name="Zhang R."/>
        </authorList>
    </citation>
    <scope>INTERACTION WITH RAB35</scope>
</reference>
<reference key="23">
    <citation type="journal article" date="2020" name="J. Cell Biol.">
        <title>GRAF2, WDR44, and MICAL1 mediate Rab8/10/11-dependent export of E-cadherin, MMP14, and CFTR DeltaF508.</title>
        <authorList>
            <person name="Lucken-Ardjomande Haesler S."/>
            <person name="Vallis Y."/>
            <person name="Pasche M."/>
            <person name="McMahon H.T."/>
        </authorList>
    </citation>
    <scope>FUNCTION</scope>
    <scope>INTERACTION WITH ARHGAP26; ARHGAP10; RAB8A; RAB8B AND RAB10</scope>
    <scope>MUTAGENESIS OF 91-GLY--GLY-96 AND LYS-832</scope>
    <scope>SUBCELLULAR LOCATION</scope>
</reference>
<reference key="24">
    <citation type="journal article" date="2006" name="J. Biomol. NMR">
        <title>Solution structure of calponin homology domain of Human MICAL-1.</title>
        <authorList>
            <person name="Sun H."/>
            <person name="Dai H."/>
            <person name="Zhang J."/>
            <person name="Jin X."/>
            <person name="Xiong S."/>
            <person name="Xu J."/>
            <person name="Wu J."/>
            <person name="Shi Y."/>
        </authorList>
    </citation>
    <scope>STRUCTURE BY NMR OF 506-614</scope>
</reference>
<reference key="25">
    <citation type="journal article" date="2007" name="Biophys. Chem.">
        <title>Investigation of the four cooperative unfolding units existing in the MICAL-1 CH domain.</title>
        <authorList>
            <person name="Jin X."/>
            <person name="Zhang J."/>
            <person name="Dai H."/>
            <person name="Sun H."/>
            <person name="Wang D."/>
            <person name="Wu J."/>
            <person name="Shi Y."/>
        </authorList>
    </citation>
    <scope>STRUCTURE BY NMR OF 506-614</scope>
</reference>
<reference key="26">
    <citation type="journal article" date="2016" name="Elife">
        <title>bMERB domains are bivalent Rab8 family effectors evolved by gene duplication.</title>
        <authorList>
            <person name="Rai A."/>
            <person name="Oprisko A."/>
            <person name="Campos J."/>
            <person name="Fu Y."/>
            <person name="Friese T."/>
            <person name="Itzen A."/>
            <person name="Goody R.S."/>
            <person name="Gazdag E.M."/>
            <person name="Muller M.P."/>
        </authorList>
    </citation>
    <scope>X-RAY CRYSTALLOGRAPHY (2.80 ANGSTROMS) OF 918-1067 IN COMPLEX WITH RAB10</scope>
    <scope>INTERACTION WITH RAB1B; RAB8A; RAB13 AND RAB15</scope>
    <scope>DOMAIN</scope>
    <scope>FUNCTION</scope>
</reference>
<reference key="27">
    <citation type="journal article" date="2017" name="Nat. Commun.">
        <title>Oxidation of F-actin controls the terminal steps of cytokinesis.</title>
        <authorList>
            <person name="Fremont S."/>
            <person name="Hammich H."/>
            <person name="Bai J."/>
            <person name="Wioland H."/>
            <person name="Klinkert K."/>
            <person name="Rocancourt M."/>
            <person name="Kikuti C."/>
            <person name="Stroebel D."/>
            <person name="Romet-Lemonne G."/>
            <person name="Pylypenko O."/>
            <person name="Houdusse A."/>
            <person name="Echard A."/>
        </authorList>
    </citation>
    <scope>X-RAY CRYSTALLOGRAPHY (3.30 ANGSTROMS) OF 918-1067</scope>
    <scope>FUNCTION</scope>
    <scope>SUBCELLULAR LOCATION</scope>
    <scope>INTERACTION WITH RAB35</scope>
</reference>
<reference key="28">
    <citation type="journal article" date="2006" name="Science">
        <title>The consensus coding sequences of human breast and colorectal cancers.</title>
        <authorList>
            <person name="Sjoeblom T."/>
            <person name="Jones S."/>
            <person name="Wood L.D."/>
            <person name="Parsons D.W."/>
            <person name="Lin J."/>
            <person name="Barber T.D."/>
            <person name="Mandelker D."/>
            <person name="Leary R.J."/>
            <person name="Ptak J."/>
            <person name="Silliman N."/>
            <person name="Szabo S."/>
            <person name="Buckhaults P."/>
            <person name="Farrell C."/>
            <person name="Meeh P."/>
            <person name="Markowitz S.D."/>
            <person name="Willis J."/>
            <person name="Dawson D."/>
            <person name="Willson J.K.V."/>
            <person name="Gazdar A.F."/>
            <person name="Hartigan J."/>
            <person name="Wu L."/>
            <person name="Liu C."/>
            <person name="Parmigiani G."/>
            <person name="Park B.H."/>
            <person name="Bachman K.E."/>
            <person name="Papadopoulos N."/>
            <person name="Vogelstein B."/>
            <person name="Kinzler K.W."/>
            <person name="Velculescu V.E."/>
        </authorList>
    </citation>
    <scope>VARIANT [LARGE SCALE ANALYSIS] MET-309</scope>
</reference>
<sequence>MASPTSTNPAHAHFESFLQAQLCQDVLSSFQELCGALGLEPGGGLPQYHKIKDQLNYWSAKSLWTKLDKRAGQPVYQQGRACTSTKCLVVGAGPCGLRVAVELALLGARVVLVEKRTKFSRHNVLHLWPFTIHDLRALGAKKFYGRFCTGTLDHISIRQLQLLLLKVALLLGVEIHWGVTFTGLQPPPRKGSGWRAQLQPNPPAQLANYEFDVLISAAGGKFVPEGFKVREMRGKLAIGITANFVNGRTVEETQVPEISGVARIYNQSFFQSLLKATGIDLENIVYYKDDTHYFVMTAKKQCLLRLGVLRQDWPDTNRLLGSANVVPEALQRFTRAAADFATHGKLGKLEFAQDAHGQPDVSAFDFTSMMRAESSARVQEKHGARLLLGLVGDCLVEPFWPLGTGVARGFLAAFDAAWMVKRWAEGAESLEVLAERESLYQLLSQTSPENMHRNVAQYGLDPATRYPNLNLRAVTPNQVRDLYDVLAKEPVQRNNDKTDTGMPATGSAGTQEELLRWCQEQTAGYPGVHVSDLSSSWADGLALCALVYRLQPGLLEPSELQGLGALEATAWALKVAENELGITPVVSAQAVVAGSDPLGLIAYLSHFHSAFKSMAHSPGPVSQASPGTSSAVLFLSKLQRTLQRSRAKENAEDAGGKKLRLEMEAETPSTEVPPDPEPGVPLTPPSQHQEAGAGDLCALCGEHLYVLERLCVNGHFFHRSCFRCHTCEATLWPGGYEQHPGDGHFYCLQHLPQTDHKAEGSDRGPESPELPTPSENSMPPGLSTPTASQEGAGPVPDPSQPTRRQIRLSSPERQRLSSLNLTPDPEMEPPPKPPRSCSALARHALESSFVGWGLPVQSPQALVAMEKEEKESPFSSEEEEEDVPLDSDVEQALQTFAKTSGTMNNYPTWRRTLLRRAKEEEMKRFCKAQTIQRRLNEIEAALRELEAEGVKLELALRRQSSSPEQQKKLWVGQLLQLVDKKNSLVAEEAELMITVQELNLEEKQWQLDQELRGYMNREENLKTAADRQAEDQVLRKLVDLVNQRDALIRFQEERRLSELALGTGAQG</sequence>
<protein>
    <recommendedName>
        <fullName evidence="28">[F-actin]-monooxygenase MICAL1</fullName>
        <ecNumber evidence="22">1.14.13.225</ecNumber>
        <ecNumber evidence="18 19 22">1.6.3.1</ecNumber>
    </recommendedName>
    <alternativeName>
        <fullName>Molecule interacting with CasL protein 1</fullName>
        <shortName>MICAL-1</shortName>
    </alternativeName>
    <alternativeName>
        <fullName>NEDD9-interacting protein with calponin homology and LIM domains</fullName>
    </alternativeName>
</protein>
<dbReference type="EC" id="1.14.13.225" evidence="22"/>
<dbReference type="EC" id="1.6.3.1" evidence="18 19 22"/>
<dbReference type="EMBL" id="AB048948">
    <property type="protein sequence ID" value="BAB86289.1"/>
    <property type="molecule type" value="mRNA"/>
</dbReference>
<dbReference type="EMBL" id="AK024500">
    <property type="protein sequence ID" value="BAB15790.1"/>
    <property type="molecule type" value="mRNA"/>
</dbReference>
<dbReference type="EMBL" id="AK021999">
    <property type="protein sequence ID" value="BAB13949.1"/>
    <property type="molecule type" value="mRNA"/>
</dbReference>
<dbReference type="EMBL" id="AK025392">
    <property type="protein sequence ID" value="BAB15124.1"/>
    <property type="molecule type" value="mRNA"/>
</dbReference>
<dbReference type="EMBL" id="AK296284">
    <property type="protein sequence ID" value="BAH12301.1"/>
    <property type="molecule type" value="mRNA"/>
</dbReference>
<dbReference type="EMBL" id="AL109947">
    <property type="status" value="NOT_ANNOTATED_CDS"/>
    <property type="molecule type" value="Genomic_DNA"/>
</dbReference>
<dbReference type="EMBL" id="CH471051">
    <property type="protein sequence ID" value="EAW48344.1"/>
    <property type="molecule type" value="Genomic_DNA"/>
</dbReference>
<dbReference type="EMBL" id="CH471051">
    <property type="protein sequence ID" value="EAW48345.1"/>
    <property type="molecule type" value="Genomic_DNA"/>
</dbReference>
<dbReference type="EMBL" id="BC009972">
    <property type="protein sequence ID" value="AAH09972.2"/>
    <property type="molecule type" value="mRNA"/>
</dbReference>
<dbReference type="EMBL" id="BC042144">
    <property type="protein sequence ID" value="AAH42144.1"/>
    <property type="molecule type" value="mRNA"/>
</dbReference>
<dbReference type="EMBL" id="BC052983">
    <property type="protein sequence ID" value="AAH52983.1"/>
    <property type="molecule type" value="mRNA"/>
</dbReference>
<dbReference type="EMBL" id="AL122098">
    <property type="protein sequence ID" value="CAB59266.1"/>
    <property type="molecule type" value="mRNA"/>
</dbReference>
<dbReference type="CCDS" id="CCDS5076.1">
    <molecule id="Q8TDZ2-1"/>
</dbReference>
<dbReference type="CCDS" id="CCDS55047.1">
    <molecule id="Q8TDZ2-2"/>
</dbReference>
<dbReference type="CCDS" id="CCDS69170.1">
    <molecule id="Q8TDZ2-4"/>
</dbReference>
<dbReference type="PIR" id="T34532">
    <property type="entry name" value="T34532"/>
</dbReference>
<dbReference type="RefSeq" id="NP_001152763.1">
    <molecule id="Q8TDZ2-2"/>
    <property type="nucleotide sequence ID" value="NM_001159291.2"/>
</dbReference>
<dbReference type="RefSeq" id="NP_001273542.1">
    <molecule id="Q8TDZ2-4"/>
    <property type="nucleotide sequence ID" value="NM_001286613.2"/>
</dbReference>
<dbReference type="RefSeq" id="NP_073602.3">
    <molecule id="Q8TDZ2-1"/>
    <property type="nucleotide sequence ID" value="NM_022765.3"/>
</dbReference>
<dbReference type="PDB" id="1WYL">
    <property type="method" value="NMR"/>
    <property type="chains" value="A=510-612"/>
</dbReference>
<dbReference type="PDB" id="2CO8">
    <property type="method" value="NMR"/>
    <property type="chains" value="A=687-755"/>
</dbReference>
<dbReference type="PDB" id="2DK9">
    <property type="method" value="NMR"/>
    <property type="chains" value="A=506-614"/>
</dbReference>
<dbReference type="PDB" id="5LE0">
    <property type="method" value="X-ray"/>
    <property type="resolution" value="3.30 A"/>
    <property type="chains" value="B=918-1067"/>
</dbReference>
<dbReference type="PDB" id="5LPN">
    <property type="method" value="X-ray"/>
    <property type="resolution" value="2.80 A"/>
    <property type="chains" value="B=918-1067"/>
</dbReference>
<dbReference type="PDB" id="6KU0">
    <property type="method" value="X-ray"/>
    <property type="resolution" value="1.60 A"/>
    <property type="chains" value="B/D=799-822"/>
</dbReference>
<dbReference type="PDB" id="8HLO">
    <property type="method" value="X-ray"/>
    <property type="resolution" value="1.17 A"/>
    <property type="chains" value="C=828-836"/>
</dbReference>
<dbReference type="PDB" id="8Y6K">
    <property type="method" value="EM"/>
    <property type="resolution" value="3.94 A"/>
    <property type="chains" value="A=1-1067"/>
</dbReference>
<dbReference type="PDB" id="9EWY">
    <property type="method" value="EM"/>
    <property type="resolution" value="3.10 A"/>
    <property type="chains" value="A=1-1067"/>
</dbReference>
<dbReference type="PDBsum" id="1WYL"/>
<dbReference type="PDBsum" id="2CO8"/>
<dbReference type="PDBsum" id="2DK9"/>
<dbReference type="PDBsum" id="5LE0"/>
<dbReference type="PDBsum" id="5LPN"/>
<dbReference type="PDBsum" id="6KU0"/>
<dbReference type="PDBsum" id="8HLO"/>
<dbReference type="PDBsum" id="8Y6K"/>
<dbReference type="PDBsum" id="9EWY"/>
<dbReference type="BMRB" id="Q8TDZ2"/>
<dbReference type="EMDB" id="EMD-38989"/>
<dbReference type="EMDB" id="EMD-50026"/>
<dbReference type="SASBDB" id="Q8TDZ2"/>
<dbReference type="SMR" id="Q8TDZ2"/>
<dbReference type="BioGRID" id="122290">
    <property type="interactions" value="78"/>
</dbReference>
<dbReference type="CORUM" id="Q8TDZ2"/>
<dbReference type="FunCoup" id="Q8TDZ2">
    <property type="interactions" value="312"/>
</dbReference>
<dbReference type="IntAct" id="Q8TDZ2">
    <property type="interactions" value="60"/>
</dbReference>
<dbReference type="MINT" id="Q8TDZ2"/>
<dbReference type="STRING" id="9606.ENSP00000486901"/>
<dbReference type="GlyCosmos" id="Q8TDZ2">
    <property type="glycosylation" value="1 site, 1 glycan"/>
</dbReference>
<dbReference type="GlyGen" id="Q8TDZ2">
    <property type="glycosylation" value="2 sites, 1 O-linked glycan (1 site)"/>
</dbReference>
<dbReference type="iPTMnet" id="Q8TDZ2"/>
<dbReference type="MetOSite" id="Q8TDZ2"/>
<dbReference type="PhosphoSitePlus" id="Q8TDZ2"/>
<dbReference type="BioMuta" id="MICAL1"/>
<dbReference type="DMDM" id="45593495"/>
<dbReference type="jPOST" id="Q8TDZ2"/>
<dbReference type="MassIVE" id="Q8TDZ2"/>
<dbReference type="PaxDb" id="9606-ENSP00000351664"/>
<dbReference type="PeptideAtlas" id="Q8TDZ2"/>
<dbReference type="ProteomicsDB" id="74376">
    <molecule id="Q8TDZ2-1"/>
</dbReference>
<dbReference type="ProteomicsDB" id="74377">
    <molecule id="Q8TDZ2-2"/>
</dbReference>
<dbReference type="ProteomicsDB" id="74378">
    <molecule id="Q8TDZ2-3"/>
</dbReference>
<dbReference type="ProteomicsDB" id="74379">
    <molecule id="Q8TDZ2-4"/>
</dbReference>
<dbReference type="Pumba" id="Q8TDZ2"/>
<dbReference type="Antibodypedia" id="32258">
    <property type="antibodies" value="302 antibodies from 24 providers"/>
</dbReference>
<dbReference type="DNASU" id="64780"/>
<dbReference type="Ensembl" id="ENST00000358577.7">
    <molecule id="Q8TDZ2-2"/>
    <property type="protein sequence ID" value="ENSP00000351385.3"/>
    <property type="gene ID" value="ENSG00000135596.18"/>
</dbReference>
<dbReference type="Ensembl" id="ENST00000358807.8">
    <molecule id="Q8TDZ2-1"/>
    <property type="protein sequence ID" value="ENSP00000351664.3"/>
    <property type="gene ID" value="ENSG00000135596.18"/>
</dbReference>
<dbReference type="Ensembl" id="ENST00000630715.2">
    <molecule id="Q8TDZ2-4"/>
    <property type="protein sequence ID" value="ENSP00000486901.1"/>
    <property type="gene ID" value="ENSG00000135596.18"/>
</dbReference>
<dbReference type="GeneID" id="64780"/>
<dbReference type="KEGG" id="hsa:64780"/>
<dbReference type="MANE-Select" id="ENST00000358807.8">
    <property type="protein sequence ID" value="ENSP00000351664.3"/>
    <property type="RefSeq nucleotide sequence ID" value="NM_022765.4"/>
    <property type="RefSeq protein sequence ID" value="NP_073602.3"/>
</dbReference>
<dbReference type="UCSC" id="uc003ptk.4">
    <molecule id="Q8TDZ2-1"/>
    <property type="organism name" value="human"/>
</dbReference>
<dbReference type="AGR" id="HGNC:20619"/>
<dbReference type="CTD" id="64780"/>
<dbReference type="DisGeNET" id="64780"/>
<dbReference type="GeneCards" id="MICAL1"/>
<dbReference type="GeneReviews" id="MICAL1"/>
<dbReference type="HGNC" id="HGNC:20619">
    <property type="gene designation" value="MICAL1"/>
</dbReference>
<dbReference type="HPA" id="ENSG00000135596">
    <property type="expression patterns" value="Low tissue specificity"/>
</dbReference>
<dbReference type="MalaCards" id="MICAL1"/>
<dbReference type="MIM" id="607129">
    <property type="type" value="gene"/>
</dbReference>
<dbReference type="neXtProt" id="NX_Q8TDZ2"/>
<dbReference type="OpenTargets" id="ENSG00000135596"/>
<dbReference type="PharmGKB" id="PA134900249"/>
<dbReference type="VEuPathDB" id="HostDB:ENSG00000135596"/>
<dbReference type="eggNOG" id="KOG1700">
    <property type="taxonomic scope" value="Eukaryota"/>
</dbReference>
<dbReference type="GeneTree" id="ENSGT00940000159117"/>
<dbReference type="HOGENOM" id="CLU_000329_0_0_1"/>
<dbReference type="InParanoid" id="Q8TDZ2"/>
<dbReference type="OMA" id="APEWKEK"/>
<dbReference type="OrthoDB" id="20799at2759"/>
<dbReference type="PAN-GO" id="Q8TDZ2">
    <property type="GO annotations" value="4 GO annotations based on evolutionary models"/>
</dbReference>
<dbReference type="PhylomeDB" id="Q8TDZ2"/>
<dbReference type="TreeFam" id="TF324129"/>
<dbReference type="BRENDA" id="1.14.13.225">
    <property type="organism ID" value="2681"/>
</dbReference>
<dbReference type="PathwayCommons" id="Q8TDZ2"/>
<dbReference type="Reactome" id="R-HSA-983231">
    <property type="pathway name" value="Factors involved in megakaryocyte development and platelet production"/>
</dbReference>
<dbReference type="SABIO-RK" id="Q8TDZ2"/>
<dbReference type="SignaLink" id="Q8TDZ2"/>
<dbReference type="BioGRID-ORCS" id="64780">
    <property type="hits" value="10 hits in 1154 CRISPR screens"/>
</dbReference>
<dbReference type="ChiTaRS" id="MICAL1">
    <property type="organism name" value="human"/>
</dbReference>
<dbReference type="EvolutionaryTrace" id="Q8TDZ2"/>
<dbReference type="GeneWiki" id="MICAL1"/>
<dbReference type="GenomeRNAi" id="64780"/>
<dbReference type="Pharos" id="Q8TDZ2">
    <property type="development level" value="Tbio"/>
</dbReference>
<dbReference type="PRO" id="PR:Q8TDZ2"/>
<dbReference type="Proteomes" id="UP000005640">
    <property type="component" value="Chromosome 6"/>
</dbReference>
<dbReference type="RNAct" id="Q8TDZ2">
    <property type="molecule type" value="protein"/>
</dbReference>
<dbReference type="Bgee" id="ENSG00000135596">
    <property type="expression patterns" value="Expressed in right coronary artery and 153 other cell types or tissues"/>
</dbReference>
<dbReference type="ExpressionAtlas" id="Q8TDZ2">
    <property type="expression patterns" value="baseline and differential"/>
</dbReference>
<dbReference type="GO" id="GO:0015629">
    <property type="term" value="C:actin cytoskeleton"/>
    <property type="evidence" value="ECO:0000318"/>
    <property type="project" value="GO_Central"/>
</dbReference>
<dbReference type="GO" id="GO:0005884">
    <property type="term" value="C:actin filament"/>
    <property type="evidence" value="ECO:0000314"/>
    <property type="project" value="UniProt"/>
</dbReference>
<dbReference type="GO" id="GO:0036064">
    <property type="term" value="C:ciliary basal body"/>
    <property type="evidence" value="ECO:0000314"/>
    <property type="project" value="HPA"/>
</dbReference>
<dbReference type="GO" id="GO:0005929">
    <property type="term" value="C:cilium"/>
    <property type="evidence" value="ECO:0000314"/>
    <property type="project" value="HPA"/>
</dbReference>
<dbReference type="GO" id="GO:0005737">
    <property type="term" value="C:cytoplasm"/>
    <property type="evidence" value="ECO:0000314"/>
    <property type="project" value="UniProtKB"/>
</dbReference>
<dbReference type="GO" id="GO:0005829">
    <property type="term" value="C:cytosol"/>
    <property type="evidence" value="ECO:0000314"/>
    <property type="project" value="HPA"/>
</dbReference>
<dbReference type="GO" id="GO:0010008">
    <property type="term" value="C:endosome membrane"/>
    <property type="evidence" value="ECO:0000314"/>
    <property type="project" value="UniProtKB"/>
</dbReference>
<dbReference type="GO" id="GO:1990026">
    <property type="term" value="C:hippocampal mossy fiber expansion"/>
    <property type="evidence" value="ECO:0007669"/>
    <property type="project" value="Ensembl"/>
</dbReference>
<dbReference type="GO" id="GO:0045171">
    <property type="term" value="C:intercellular bridge"/>
    <property type="evidence" value="ECO:0000314"/>
    <property type="project" value="UniProtKB"/>
</dbReference>
<dbReference type="GO" id="GO:0005882">
    <property type="term" value="C:intermediate filament"/>
    <property type="evidence" value="ECO:0000303"/>
    <property type="project" value="UniProtKB"/>
</dbReference>
<dbReference type="GO" id="GO:0030496">
    <property type="term" value="C:midbody"/>
    <property type="evidence" value="ECO:0000314"/>
    <property type="project" value="UniProtKB"/>
</dbReference>
<dbReference type="GO" id="GO:0005654">
    <property type="term" value="C:nucleoplasm"/>
    <property type="evidence" value="ECO:0000314"/>
    <property type="project" value="HPA"/>
</dbReference>
<dbReference type="GO" id="GO:0005886">
    <property type="term" value="C:plasma membrane"/>
    <property type="evidence" value="ECO:0000314"/>
    <property type="project" value="HPA"/>
</dbReference>
<dbReference type="GO" id="GO:0003779">
    <property type="term" value="F:actin binding"/>
    <property type="evidence" value="ECO:0000314"/>
    <property type="project" value="UniProtKB"/>
</dbReference>
<dbReference type="GO" id="GO:0051015">
    <property type="term" value="F:actin filament binding"/>
    <property type="evidence" value="ECO:0000318"/>
    <property type="project" value="GO_Central"/>
</dbReference>
<dbReference type="GO" id="GO:0120501">
    <property type="term" value="F:F-actin monooxygenase activity"/>
    <property type="evidence" value="ECO:0007669"/>
    <property type="project" value="UniProtKB-EC"/>
</dbReference>
<dbReference type="GO" id="GO:0071949">
    <property type="term" value="F:FAD binding"/>
    <property type="evidence" value="ECO:0000314"/>
    <property type="project" value="UniProtKB"/>
</dbReference>
<dbReference type="GO" id="GO:0046872">
    <property type="term" value="F:metal ion binding"/>
    <property type="evidence" value="ECO:0007669"/>
    <property type="project" value="UniProtKB-KW"/>
</dbReference>
<dbReference type="GO" id="GO:0004497">
    <property type="term" value="F:monooxygenase activity"/>
    <property type="evidence" value="ECO:0000314"/>
    <property type="project" value="UniProt"/>
</dbReference>
<dbReference type="GO" id="GO:0016174">
    <property type="term" value="F:NAD(P)H oxidase H2O2-forming activity"/>
    <property type="evidence" value="ECO:0000314"/>
    <property type="project" value="UniProtKB"/>
</dbReference>
<dbReference type="GO" id="GO:0106294">
    <property type="term" value="F:NADPH oxidase H202-forming activity"/>
    <property type="evidence" value="ECO:0007669"/>
    <property type="project" value="RHEA"/>
</dbReference>
<dbReference type="GO" id="GO:0016709">
    <property type="term" value="F:oxidoreductase activity, acting on paired donors, with incorporation or reduction of molecular oxygen, NAD(P)H as one donor, and incorporation of one atom of oxygen"/>
    <property type="evidence" value="ECO:0000314"/>
    <property type="project" value="UniProtKB"/>
</dbReference>
<dbReference type="GO" id="GO:0019901">
    <property type="term" value="F:protein kinase binding"/>
    <property type="evidence" value="ECO:0007669"/>
    <property type="project" value="Ensembl"/>
</dbReference>
<dbReference type="GO" id="GO:0017124">
    <property type="term" value="F:SH3 domain binding"/>
    <property type="evidence" value="ECO:0000353"/>
    <property type="project" value="UniProtKB"/>
</dbReference>
<dbReference type="GO" id="GO:0031267">
    <property type="term" value="F:small GTPase binding"/>
    <property type="evidence" value="ECO:0007669"/>
    <property type="project" value="Ensembl"/>
</dbReference>
<dbReference type="GO" id="GO:0051017">
    <property type="term" value="P:actin filament bundle assembly"/>
    <property type="evidence" value="ECO:0000318"/>
    <property type="project" value="GO_Central"/>
</dbReference>
<dbReference type="GO" id="GO:0030042">
    <property type="term" value="P:actin filament depolymerization"/>
    <property type="evidence" value="ECO:0000314"/>
    <property type="project" value="UniProtKB"/>
</dbReference>
<dbReference type="GO" id="GO:0007010">
    <property type="term" value="P:cytoskeleton organization"/>
    <property type="evidence" value="ECO:0000303"/>
    <property type="project" value="UniProtKB"/>
</dbReference>
<dbReference type="GO" id="GO:0043066">
    <property type="term" value="P:negative regulation of apoptotic process"/>
    <property type="evidence" value="ECO:0007669"/>
    <property type="project" value="Ensembl"/>
</dbReference>
<dbReference type="GO" id="GO:1903305">
    <property type="term" value="P:regulation of regulated secretory pathway"/>
    <property type="evidence" value="ECO:0007669"/>
    <property type="project" value="Ensembl"/>
</dbReference>
<dbReference type="GO" id="GO:0007165">
    <property type="term" value="P:signal transduction"/>
    <property type="evidence" value="ECO:0000303"/>
    <property type="project" value="UniProtKB"/>
</dbReference>
<dbReference type="GO" id="GO:0019417">
    <property type="term" value="P:sulfur oxidation"/>
    <property type="evidence" value="ECO:0000250"/>
    <property type="project" value="UniProtKB"/>
</dbReference>
<dbReference type="CDD" id="cd21196">
    <property type="entry name" value="CH_MICAL1"/>
    <property type="match status" value="1"/>
</dbReference>
<dbReference type="CDD" id="cd09358">
    <property type="entry name" value="LIM_Mical_like"/>
    <property type="match status" value="1"/>
</dbReference>
<dbReference type="FunFam" id="1.10.418.10:FF:000058">
    <property type="entry name" value="F-actin-methionine sulfoxide oxidase MICAL1 isoform X1"/>
    <property type="match status" value="1"/>
</dbReference>
<dbReference type="FunFam" id="2.10.110.10:FF:000106">
    <property type="entry name" value="F-actin-monooxygenase MICAL1 isoform 1"/>
    <property type="match status" value="1"/>
</dbReference>
<dbReference type="FunFam" id="3.50.50.60:FF:000004">
    <property type="entry name" value="protein-methionine sulfoxide oxidase MICAL2 isoform X1"/>
    <property type="match status" value="1"/>
</dbReference>
<dbReference type="Gene3D" id="1.10.418.10">
    <property type="entry name" value="Calponin-like domain"/>
    <property type="match status" value="1"/>
</dbReference>
<dbReference type="Gene3D" id="2.10.110.10">
    <property type="entry name" value="Cysteine Rich Protein"/>
    <property type="match status" value="1"/>
</dbReference>
<dbReference type="Gene3D" id="3.50.50.60">
    <property type="entry name" value="FAD/NAD(P)-binding domain"/>
    <property type="match status" value="1"/>
</dbReference>
<dbReference type="InterPro" id="IPR022735">
    <property type="entry name" value="bMERB_dom"/>
</dbReference>
<dbReference type="InterPro" id="IPR001715">
    <property type="entry name" value="CH_dom"/>
</dbReference>
<dbReference type="InterPro" id="IPR036872">
    <property type="entry name" value="CH_dom_sf"/>
</dbReference>
<dbReference type="InterPro" id="IPR050540">
    <property type="entry name" value="F-actin_Monoox_Mical"/>
</dbReference>
<dbReference type="InterPro" id="IPR002938">
    <property type="entry name" value="FAD-bd"/>
</dbReference>
<dbReference type="InterPro" id="IPR036188">
    <property type="entry name" value="FAD/NAD-bd_sf"/>
</dbReference>
<dbReference type="InterPro" id="IPR001781">
    <property type="entry name" value="Znf_LIM"/>
</dbReference>
<dbReference type="PANTHER" id="PTHR23167:SF35">
    <property type="entry name" value="[F-ACTIN]-MONOOXYGENASE MICAL1"/>
    <property type="match status" value="1"/>
</dbReference>
<dbReference type="PANTHER" id="PTHR23167">
    <property type="entry name" value="CALPONIN HOMOLOGY DOMAIN-CONTAINING PROTEIN DDB_G0272472-RELATED"/>
    <property type="match status" value="1"/>
</dbReference>
<dbReference type="Pfam" id="PF12130">
    <property type="entry name" value="bMERB_dom"/>
    <property type="match status" value="1"/>
</dbReference>
<dbReference type="Pfam" id="PF00307">
    <property type="entry name" value="CH"/>
    <property type="match status" value="1"/>
</dbReference>
<dbReference type="Pfam" id="PF01494">
    <property type="entry name" value="FAD_binding_3"/>
    <property type="match status" value="1"/>
</dbReference>
<dbReference type="Pfam" id="PF00412">
    <property type="entry name" value="LIM"/>
    <property type="match status" value="1"/>
</dbReference>
<dbReference type="Pfam" id="PF25413">
    <property type="entry name" value="Rossman_Mical"/>
    <property type="match status" value="1"/>
</dbReference>
<dbReference type="SMART" id="SM00033">
    <property type="entry name" value="CH"/>
    <property type="match status" value="1"/>
</dbReference>
<dbReference type="SMART" id="SM01203">
    <property type="entry name" value="DUF3585"/>
    <property type="match status" value="1"/>
</dbReference>
<dbReference type="SMART" id="SM00132">
    <property type="entry name" value="LIM"/>
    <property type="match status" value="1"/>
</dbReference>
<dbReference type="SUPFAM" id="SSF47576">
    <property type="entry name" value="Calponin-homology domain, CH-domain"/>
    <property type="match status" value="1"/>
</dbReference>
<dbReference type="SUPFAM" id="SSF51905">
    <property type="entry name" value="FAD/NAD(P)-binding domain"/>
    <property type="match status" value="1"/>
</dbReference>
<dbReference type="SUPFAM" id="SSF57716">
    <property type="entry name" value="Glucocorticoid receptor-like (DNA-binding domain)"/>
    <property type="match status" value="2"/>
</dbReference>
<dbReference type="PROSITE" id="PS51848">
    <property type="entry name" value="BMERB"/>
    <property type="match status" value="1"/>
</dbReference>
<dbReference type="PROSITE" id="PS50021">
    <property type="entry name" value="CH"/>
    <property type="match status" value="1"/>
</dbReference>
<dbReference type="PROSITE" id="PS00478">
    <property type="entry name" value="LIM_DOMAIN_1"/>
    <property type="match status" value="1"/>
</dbReference>
<dbReference type="PROSITE" id="PS50023">
    <property type="entry name" value="LIM_DOMAIN_2"/>
    <property type="match status" value="1"/>
</dbReference>